<feature type="chain" id="PRO_0000048391" description="Tubulin beta chain">
    <location>
        <begin position="1"/>
        <end position="448"/>
    </location>
</feature>
<feature type="region of interest" description="Disordered" evidence="3">
    <location>
        <begin position="426"/>
        <end position="448"/>
    </location>
</feature>
<feature type="compositionally biased region" description="Acidic residues" evidence="3">
    <location>
        <begin position="429"/>
        <end position="448"/>
    </location>
</feature>
<feature type="binding site" evidence="2">
    <location>
        <position position="11"/>
    </location>
    <ligand>
        <name>GTP</name>
        <dbReference type="ChEBI" id="CHEBI:37565"/>
    </ligand>
</feature>
<feature type="binding site" evidence="1">
    <location>
        <position position="69"/>
    </location>
    <ligand>
        <name>GTP</name>
        <dbReference type="ChEBI" id="CHEBI:37565"/>
    </ligand>
</feature>
<feature type="binding site" evidence="1">
    <location>
        <position position="69"/>
    </location>
    <ligand>
        <name>Mg(2+)</name>
        <dbReference type="ChEBI" id="CHEBI:18420"/>
    </ligand>
</feature>
<feature type="binding site" evidence="2">
    <location>
        <position position="138"/>
    </location>
    <ligand>
        <name>GTP</name>
        <dbReference type="ChEBI" id="CHEBI:37565"/>
    </ligand>
</feature>
<feature type="binding site" evidence="2">
    <location>
        <position position="142"/>
    </location>
    <ligand>
        <name>GTP</name>
        <dbReference type="ChEBI" id="CHEBI:37565"/>
    </ligand>
</feature>
<feature type="binding site" evidence="2">
    <location>
        <position position="143"/>
    </location>
    <ligand>
        <name>GTP</name>
        <dbReference type="ChEBI" id="CHEBI:37565"/>
    </ligand>
</feature>
<feature type="binding site" evidence="2">
    <location>
        <position position="144"/>
    </location>
    <ligand>
        <name>GTP</name>
        <dbReference type="ChEBI" id="CHEBI:37565"/>
    </ligand>
</feature>
<feature type="binding site" evidence="2">
    <location>
        <position position="204"/>
    </location>
    <ligand>
        <name>GTP</name>
        <dbReference type="ChEBI" id="CHEBI:37565"/>
    </ligand>
</feature>
<feature type="binding site" evidence="2">
    <location>
        <position position="226"/>
    </location>
    <ligand>
        <name>GTP</name>
        <dbReference type="ChEBI" id="CHEBI:37565"/>
    </ligand>
</feature>
<proteinExistence type="inferred from homology"/>
<gene>
    <name type="primary">TUB2</name>
</gene>
<keyword id="KW-0963">Cytoplasm</keyword>
<keyword id="KW-0206">Cytoskeleton</keyword>
<keyword id="KW-0342">GTP-binding</keyword>
<keyword id="KW-0460">Magnesium</keyword>
<keyword id="KW-0479">Metal-binding</keyword>
<keyword id="KW-0493">Microtubule</keyword>
<keyword id="KW-0547">Nucleotide-binding</keyword>
<comment type="function">
    <text>Tubulin is the major constituent of microtubules, a cylinder consisting of laterally associated linear protofilaments composed of alpha- and beta-tubulin heterodimers. Microtubules grow by the addition of GTP-tubulin dimers to the microtubule end, where a stabilizing cap forms. Below the cap, tubulin dimers are in GDP-bound state, owing to GTPase activity of alpha-tubulin.</text>
</comment>
<comment type="cofactor">
    <cofactor evidence="1">
        <name>Mg(2+)</name>
        <dbReference type="ChEBI" id="CHEBI:18420"/>
    </cofactor>
</comment>
<comment type="subunit">
    <text>Dimer of alpha and beta chains. A typical microtubule is a hollow water-filled tube with an outer diameter of 25 nm and an inner diameter of 15 nM. Alpha-beta heterodimers associate head-to-tail to form protofilaments running lengthwise along the microtubule wall with the beta-tubulin subunit facing the microtubule plus end conferring a structural polarity. Microtubules usually have 13 protofilaments but different protofilament numbers can be found in some organisms and specialized cells.</text>
</comment>
<comment type="subcellular location">
    <subcellularLocation>
        <location>Cytoplasm</location>
        <location>Cytoskeleton</location>
    </subcellularLocation>
</comment>
<comment type="similarity">
    <text evidence="4">Belongs to the tubulin family.</text>
</comment>
<reference key="1">
    <citation type="submission" date="1990-12" db="EMBL/GenBank/DDBJ databases">
        <authorList>
            <person name="Tsai H."/>
            <person name="Siegel M.R."/>
            <person name="Liu J."/>
            <person name="Schardl C.L."/>
        </authorList>
    </citation>
    <scope>NUCLEOTIDE SEQUENCE [GENOMIC DNA]</scope>
    <source>
        <strain>E19</strain>
    </source>
</reference>
<reference key="2">
    <citation type="journal article" date="1994" name="Proc. Natl. Acad. Sci. U.S.A.">
        <title>Evolutionary diversification of fungal endophytes of tall fescue grass by hybridization with Epichloe species.</title>
        <authorList>
            <person name="Tsai H.F."/>
            <person name="Liu J.S."/>
            <person name="Staben C."/>
            <person name="Christensen M.J."/>
            <person name="Latch G.C."/>
            <person name="Siegel M.R."/>
            <person name="Schardl C.L."/>
        </authorList>
    </citation>
    <scope>NUCLEOTIDE SEQUENCE [GENOMIC DNA] OF 1-76</scope>
    <source>
        <strain>E19</strain>
    </source>
</reference>
<reference key="3">
    <citation type="submission" date="1993-06" db="EMBL/GenBank/DDBJ databases">
        <authorList>
            <person name="Schardl C.L."/>
        </authorList>
    </citation>
    <scope>NUCLEOTIDE SEQUENCE [GENOMIC DNA] OF 5-59</scope>
    <source>
        <strain>TF28</strain>
    </source>
</reference>
<dbReference type="EMBL" id="X56847">
    <property type="protein sequence ID" value="CAA40178.1"/>
    <property type="molecule type" value="Genomic_DNA"/>
</dbReference>
<dbReference type="EMBL" id="L06951">
    <property type="protein sequence ID" value="AAA53626.1"/>
    <property type="molecule type" value="Genomic_DNA"/>
</dbReference>
<dbReference type="EMBL" id="L06952">
    <property type="protein sequence ID" value="AAB95626.1"/>
    <property type="molecule type" value="Genomic_DNA"/>
</dbReference>
<dbReference type="EMBL" id="L06963">
    <property type="protein sequence ID" value="AAB95629.1"/>
    <property type="molecule type" value="Genomic_DNA"/>
</dbReference>
<dbReference type="EMBL" id="L06964">
    <property type="protein sequence ID" value="AAB95432.1"/>
    <property type="molecule type" value="Genomic_DNA"/>
</dbReference>
<dbReference type="EMBL" id="L20307">
    <property type="protein sequence ID" value="AAB95092.1"/>
    <property type="molecule type" value="Genomic_DNA"/>
</dbReference>
<dbReference type="PIR" id="S29625">
    <property type="entry name" value="S29625"/>
</dbReference>
<dbReference type="SMR" id="P33127"/>
<dbReference type="GO" id="GO:0005737">
    <property type="term" value="C:cytoplasm"/>
    <property type="evidence" value="ECO:0007669"/>
    <property type="project" value="UniProtKB-KW"/>
</dbReference>
<dbReference type="GO" id="GO:0005874">
    <property type="term" value="C:microtubule"/>
    <property type="evidence" value="ECO:0007669"/>
    <property type="project" value="UniProtKB-KW"/>
</dbReference>
<dbReference type="GO" id="GO:0005525">
    <property type="term" value="F:GTP binding"/>
    <property type="evidence" value="ECO:0007669"/>
    <property type="project" value="UniProtKB-KW"/>
</dbReference>
<dbReference type="GO" id="GO:0003924">
    <property type="term" value="F:GTPase activity"/>
    <property type="evidence" value="ECO:0007669"/>
    <property type="project" value="InterPro"/>
</dbReference>
<dbReference type="GO" id="GO:0046872">
    <property type="term" value="F:metal ion binding"/>
    <property type="evidence" value="ECO:0007669"/>
    <property type="project" value="UniProtKB-KW"/>
</dbReference>
<dbReference type="GO" id="GO:0005200">
    <property type="term" value="F:structural constituent of cytoskeleton"/>
    <property type="evidence" value="ECO:0007669"/>
    <property type="project" value="InterPro"/>
</dbReference>
<dbReference type="GO" id="GO:0007017">
    <property type="term" value="P:microtubule-based process"/>
    <property type="evidence" value="ECO:0007669"/>
    <property type="project" value="InterPro"/>
</dbReference>
<dbReference type="CDD" id="cd02187">
    <property type="entry name" value="beta_tubulin"/>
    <property type="match status" value="1"/>
</dbReference>
<dbReference type="FunFam" id="1.10.287.600:FF:000003">
    <property type="entry name" value="Tubulin beta chain"/>
    <property type="match status" value="1"/>
</dbReference>
<dbReference type="FunFam" id="3.30.1330.20:FF:000002">
    <property type="entry name" value="Tubulin beta chain"/>
    <property type="match status" value="1"/>
</dbReference>
<dbReference type="FunFam" id="3.40.50.1440:FF:000009">
    <property type="entry name" value="Tubulin beta chain"/>
    <property type="match status" value="1"/>
</dbReference>
<dbReference type="Gene3D" id="1.10.287.600">
    <property type="entry name" value="Helix hairpin bin"/>
    <property type="match status" value="1"/>
</dbReference>
<dbReference type="Gene3D" id="3.30.1330.20">
    <property type="entry name" value="Tubulin/FtsZ, C-terminal domain"/>
    <property type="match status" value="1"/>
</dbReference>
<dbReference type="Gene3D" id="3.40.50.1440">
    <property type="entry name" value="Tubulin/FtsZ, GTPase domain"/>
    <property type="match status" value="1"/>
</dbReference>
<dbReference type="InterPro" id="IPR013838">
    <property type="entry name" value="Beta-tubulin_BS"/>
</dbReference>
<dbReference type="InterPro" id="IPR002453">
    <property type="entry name" value="Beta_tubulin"/>
</dbReference>
<dbReference type="InterPro" id="IPR008280">
    <property type="entry name" value="Tub_FtsZ_C"/>
</dbReference>
<dbReference type="InterPro" id="IPR000217">
    <property type="entry name" value="Tubulin"/>
</dbReference>
<dbReference type="InterPro" id="IPR037103">
    <property type="entry name" value="Tubulin/FtsZ-like_C"/>
</dbReference>
<dbReference type="InterPro" id="IPR018316">
    <property type="entry name" value="Tubulin/FtsZ_2-layer-sand-dom"/>
</dbReference>
<dbReference type="InterPro" id="IPR036525">
    <property type="entry name" value="Tubulin/FtsZ_GTPase_sf"/>
</dbReference>
<dbReference type="InterPro" id="IPR023123">
    <property type="entry name" value="Tubulin_C"/>
</dbReference>
<dbReference type="InterPro" id="IPR017975">
    <property type="entry name" value="Tubulin_CS"/>
</dbReference>
<dbReference type="InterPro" id="IPR003008">
    <property type="entry name" value="Tubulin_FtsZ_GTPase"/>
</dbReference>
<dbReference type="PANTHER" id="PTHR11588">
    <property type="entry name" value="TUBULIN"/>
    <property type="match status" value="1"/>
</dbReference>
<dbReference type="Pfam" id="PF00091">
    <property type="entry name" value="Tubulin"/>
    <property type="match status" value="1"/>
</dbReference>
<dbReference type="Pfam" id="PF03953">
    <property type="entry name" value="Tubulin_C"/>
    <property type="match status" value="1"/>
</dbReference>
<dbReference type="PRINTS" id="PR01163">
    <property type="entry name" value="BETATUBULIN"/>
</dbReference>
<dbReference type="PRINTS" id="PR01161">
    <property type="entry name" value="TUBULIN"/>
</dbReference>
<dbReference type="SMART" id="SM00864">
    <property type="entry name" value="Tubulin"/>
    <property type="match status" value="1"/>
</dbReference>
<dbReference type="SMART" id="SM00865">
    <property type="entry name" value="Tubulin_C"/>
    <property type="match status" value="1"/>
</dbReference>
<dbReference type="SUPFAM" id="SSF55307">
    <property type="entry name" value="Tubulin C-terminal domain-like"/>
    <property type="match status" value="1"/>
</dbReference>
<dbReference type="SUPFAM" id="SSF52490">
    <property type="entry name" value="Tubulin nucleotide-binding domain-like"/>
    <property type="match status" value="1"/>
</dbReference>
<dbReference type="PROSITE" id="PS00227">
    <property type="entry name" value="TUBULIN"/>
    <property type="match status" value="1"/>
</dbReference>
<dbReference type="PROSITE" id="PS00228">
    <property type="entry name" value="TUBULIN_B_AUTOREG"/>
    <property type="match status" value="1"/>
</dbReference>
<organism>
    <name type="scientific">Epichloe coenophiala</name>
    <name type="common">Tall fescue endophyte fungus</name>
    <name type="synonym">Neotyphodium coenophialum</name>
    <dbReference type="NCBI Taxonomy" id="5047"/>
    <lineage>
        <taxon>Eukaryota</taxon>
        <taxon>Fungi</taxon>
        <taxon>Dikarya</taxon>
        <taxon>Ascomycota</taxon>
        <taxon>Pezizomycotina</taxon>
        <taxon>Sordariomycetes</taxon>
        <taxon>Hypocreomycetidae</taxon>
        <taxon>Hypocreales</taxon>
        <taxon>Clavicipitaceae</taxon>
        <taxon>Epichloe</taxon>
    </lineage>
</organism>
<evidence type="ECO:0000250" key="1">
    <source>
        <dbReference type="UniProtKB" id="P68363"/>
    </source>
</evidence>
<evidence type="ECO:0000250" key="2">
    <source>
        <dbReference type="UniProtKB" id="Q13509"/>
    </source>
</evidence>
<evidence type="ECO:0000256" key="3">
    <source>
        <dbReference type="SAM" id="MobiDB-lite"/>
    </source>
</evidence>
<evidence type="ECO:0000305" key="4"/>
<protein>
    <recommendedName>
        <fullName>Tubulin beta chain</fullName>
    </recommendedName>
    <alternativeName>
        <fullName>Beta-tubulin</fullName>
    </alternativeName>
</protein>
<name>TBB_EPICN</name>
<sequence>MREIVHLQTGQCGNQIGAAFWQTISGEHGLDSNGVYNGTSELQLERMSVYFNEASGNKYVPRAVLVDLEPGTMDAVRAGPFGQLFRPDNFVFGQSGAGNNWAKGHYTEGAELVDQVLDVVRREAEGCDCLQGFQITHSLGGGTGAGMGTLLISKIREEFPDRMMATFSVVPSPKVSDTVVEPYNATLSVHQLVENSDETFCIDNEALYDICMRTLKLSNPSYGDLNYLVSAVMSGVTTCLRFPGQLNSDLRKLAVNMVPFPRLHFFMVGFAPLTSRGAHSFRAVSVPELTQQMFDPKNMMAASDFRNGRYLTCSAIFRGKVAMKEVEDQMRNVQNKNSSYFVEWIPNNIQTALCAIPPRDLKMSSTFIGNSTSIQELFKRVGEQFTAMFRRKAFLHWYTGEGMDEMEFTEAESNMNDLVSEYQQYQDAGIDEEEEEYEEEAPVDEPLE</sequence>
<accession>P33127</accession>